<protein>
    <recommendedName>
        <fullName>Probable C4-dicarboxylate response regulator DctR</fullName>
    </recommendedName>
</protein>
<proteinExistence type="inferred from homology"/>
<accession>Q9K998</accession>
<reference key="1">
    <citation type="journal article" date="2000" name="Nucleic Acids Res.">
        <title>Complete genome sequence of the alkaliphilic bacterium Bacillus halodurans and genomic sequence comparison with Bacillus subtilis.</title>
        <authorList>
            <person name="Takami H."/>
            <person name="Nakasone K."/>
            <person name="Takaki Y."/>
            <person name="Maeno G."/>
            <person name="Sasaki R."/>
            <person name="Masui N."/>
            <person name="Fuji F."/>
            <person name="Hirama C."/>
            <person name="Nakamura Y."/>
            <person name="Ogasawara N."/>
            <person name="Kuhara S."/>
            <person name="Horikoshi K."/>
        </authorList>
    </citation>
    <scope>NUCLEOTIDE SEQUENCE [LARGE SCALE GENOMIC DNA]</scope>
    <source>
        <strain>ATCC BAA-125 / DSM 18197 / FERM 7344 / JCM 9153 / C-125</strain>
    </source>
</reference>
<name>DCTR_HALH5</name>
<sequence>MAKEPLIRVLLIEDDPMVQEVNRMFVEKLSGFTIVGTTATGEEGMVKTRELQPDLILLDIFMPKQDGLSFIKQIREQYIDVDIIAVTAANDTKTIKTLLRYGVMDYLVKPFTFERLKAALTQYEEMFRKMQKEAELSQDSLDEMIKQKQAQANMDDLPKGLHAHTLQQVIERLEELDEPKSAEEIGRDVGLARVTVRRYLNYLESVGQVEMDLTYGSIGRPIQTYKLKQG</sequence>
<comment type="function">
    <text evidence="1">Member of the two-component regulatory system DctS/DctR. Essential for expression of DctP (By similarity).</text>
</comment>
<comment type="subcellular location">
    <subcellularLocation>
        <location evidence="4">Cytoplasm</location>
    </subcellularLocation>
</comment>
<comment type="PTM">
    <text evidence="1">Phosphorylated by DctS.</text>
</comment>
<organism>
    <name type="scientific">Halalkalibacterium halodurans (strain ATCC BAA-125 / DSM 18197 / FERM 7344 / JCM 9153 / C-125)</name>
    <name type="common">Bacillus halodurans</name>
    <dbReference type="NCBI Taxonomy" id="272558"/>
    <lineage>
        <taxon>Bacteria</taxon>
        <taxon>Bacillati</taxon>
        <taxon>Bacillota</taxon>
        <taxon>Bacilli</taxon>
        <taxon>Bacillales</taxon>
        <taxon>Bacillaceae</taxon>
        <taxon>Halalkalibacterium (ex Joshi et al. 2022)</taxon>
    </lineage>
</organism>
<dbReference type="EMBL" id="BA000004">
    <property type="protein sequence ID" value="BAB06470.1"/>
    <property type="molecule type" value="Genomic_DNA"/>
</dbReference>
<dbReference type="PIR" id="G83993">
    <property type="entry name" value="G83993"/>
</dbReference>
<dbReference type="RefSeq" id="WP_010898899.1">
    <property type="nucleotide sequence ID" value="NC_002570.2"/>
</dbReference>
<dbReference type="SMR" id="Q9K998"/>
<dbReference type="STRING" id="272558.gene:10728650"/>
<dbReference type="KEGG" id="bha:BH2751"/>
<dbReference type="eggNOG" id="COG4565">
    <property type="taxonomic scope" value="Bacteria"/>
</dbReference>
<dbReference type="HOGENOM" id="CLU_000445_39_0_9"/>
<dbReference type="OrthoDB" id="9759232at2"/>
<dbReference type="Proteomes" id="UP000001258">
    <property type="component" value="Chromosome"/>
</dbReference>
<dbReference type="GO" id="GO:0005737">
    <property type="term" value="C:cytoplasm"/>
    <property type="evidence" value="ECO:0007669"/>
    <property type="project" value="UniProtKB-SubCell"/>
</dbReference>
<dbReference type="GO" id="GO:0003677">
    <property type="term" value="F:DNA binding"/>
    <property type="evidence" value="ECO:0007669"/>
    <property type="project" value="UniProtKB-KW"/>
</dbReference>
<dbReference type="GO" id="GO:0003700">
    <property type="term" value="F:DNA-binding transcription factor activity"/>
    <property type="evidence" value="ECO:0007669"/>
    <property type="project" value="InterPro"/>
</dbReference>
<dbReference type="GO" id="GO:0000156">
    <property type="term" value="F:phosphorelay response regulator activity"/>
    <property type="evidence" value="ECO:0007669"/>
    <property type="project" value="TreeGrafter"/>
</dbReference>
<dbReference type="CDD" id="cd19925">
    <property type="entry name" value="REC_citrate_TCS"/>
    <property type="match status" value="1"/>
</dbReference>
<dbReference type="Gene3D" id="3.40.50.2300">
    <property type="match status" value="1"/>
</dbReference>
<dbReference type="Gene3D" id="1.10.10.10">
    <property type="entry name" value="Winged helix-like DNA-binding domain superfamily/Winged helix DNA-binding domain"/>
    <property type="match status" value="1"/>
</dbReference>
<dbReference type="InterPro" id="IPR051271">
    <property type="entry name" value="2C-system_Tx_regulators"/>
</dbReference>
<dbReference type="InterPro" id="IPR011006">
    <property type="entry name" value="CheY-like_superfamily"/>
</dbReference>
<dbReference type="InterPro" id="IPR024187">
    <property type="entry name" value="Sig_transdc_resp-reg_cit/mal"/>
</dbReference>
<dbReference type="InterPro" id="IPR001789">
    <property type="entry name" value="Sig_transdc_resp-reg_receiver"/>
</dbReference>
<dbReference type="InterPro" id="IPR036388">
    <property type="entry name" value="WH-like_DNA-bd_sf"/>
</dbReference>
<dbReference type="InterPro" id="IPR036390">
    <property type="entry name" value="WH_DNA-bd_sf"/>
</dbReference>
<dbReference type="PANTHER" id="PTHR45526:SF1">
    <property type="entry name" value="TRANSCRIPTIONAL REGULATORY PROTEIN DCUR-RELATED"/>
    <property type="match status" value="1"/>
</dbReference>
<dbReference type="PANTHER" id="PTHR45526">
    <property type="entry name" value="TRANSCRIPTIONAL REGULATORY PROTEIN DPIA"/>
    <property type="match status" value="1"/>
</dbReference>
<dbReference type="Pfam" id="PF00072">
    <property type="entry name" value="Response_reg"/>
    <property type="match status" value="1"/>
</dbReference>
<dbReference type="PIRSF" id="PIRSF006171">
    <property type="entry name" value="RR_citrat_malat"/>
    <property type="match status" value="1"/>
</dbReference>
<dbReference type="SMART" id="SM00448">
    <property type="entry name" value="REC"/>
    <property type="match status" value="1"/>
</dbReference>
<dbReference type="SUPFAM" id="SSF52172">
    <property type="entry name" value="CheY-like"/>
    <property type="match status" value="1"/>
</dbReference>
<dbReference type="SUPFAM" id="SSF46785">
    <property type="entry name" value="Winged helix' DNA-binding domain"/>
    <property type="match status" value="1"/>
</dbReference>
<dbReference type="PROSITE" id="PS50110">
    <property type="entry name" value="RESPONSE_REGULATORY"/>
    <property type="match status" value="1"/>
</dbReference>
<gene>
    <name type="primary">dctR</name>
    <name type="ordered locus">BH2751</name>
</gene>
<feature type="chain" id="PRO_0000081090" description="Probable C4-dicarboxylate response regulator DctR">
    <location>
        <begin position="1"/>
        <end position="230"/>
    </location>
</feature>
<feature type="domain" description="Response regulatory" evidence="3">
    <location>
        <begin position="8"/>
        <end position="124"/>
    </location>
</feature>
<feature type="DNA-binding region" description="H-T-H motif" evidence="2">
    <location>
        <begin position="183"/>
        <end position="209"/>
    </location>
</feature>
<feature type="modified residue" description="4-aspartylphosphate" evidence="3">
    <location>
        <position position="59"/>
    </location>
</feature>
<evidence type="ECO:0000250" key="1"/>
<evidence type="ECO:0000255" key="2"/>
<evidence type="ECO:0000255" key="3">
    <source>
        <dbReference type="PROSITE-ProRule" id="PRU00169"/>
    </source>
</evidence>
<evidence type="ECO:0000305" key="4"/>
<keyword id="KW-0010">Activator</keyword>
<keyword id="KW-0963">Cytoplasm</keyword>
<keyword id="KW-0238">DNA-binding</keyword>
<keyword id="KW-0597">Phosphoprotein</keyword>
<keyword id="KW-1185">Reference proteome</keyword>
<keyword id="KW-0804">Transcription</keyword>
<keyword id="KW-0805">Transcription regulation</keyword>
<keyword id="KW-0902">Two-component regulatory system</keyword>